<feature type="initiator methionine" description="Removed" evidence="4">
    <location>
        <position position="1"/>
    </location>
</feature>
<feature type="chain" id="PRO_0000198729" description="Myosin regulatory light chain 2, ventricular/cardiac muscle isoform">
    <location>
        <begin position="2"/>
        <end position="166"/>
    </location>
</feature>
<feature type="domain" description="EF-hand 1" evidence="6">
    <location>
        <begin position="24"/>
        <end position="59"/>
    </location>
</feature>
<feature type="domain" description="EF-hand 2" evidence="6">
    <location>
        <begin position="94"/>
        <end position="129"/>
    </location>
</feature>
<feature type="domain" description="EF-hand 3" evidence="6">
    <location>
        <begin position="130"/>
        <end position="165"/>
    </location>
</feature>
<feature type="binding site" evidence="6">
    <location>
        <position position="37"/>
    </location>
    <ligand>
        <name>Ca(2+)</name>
        <dbReference type="ChEBI" id="CHEBI:29108"/>
    </ligand>
</feature>
<feature type="binding site" evidence="6">
    <location>
        <position position="39"/>
    </location>
    <ligand>
        <name>Ca(2+)</name>
        <dbReference type="ChEBI" id="CHEBI:29108"/>
    </ligand>
</feature>
<feature type="binding site" evidence="6">
    <location>
        <position position="41"/>
    </location>
    <ligand>
        <name>Ca(2+)</name>
        <dbReference type="ChEBI" id="CHEBI:29108"/>
    </ligand>
</feature>
<feature type="binding site" evidence="6">
    <location>
        <position position="48"/>
    </location>
    <ligand>
        <name>Ca(2+)</name>
        <dbReference type="ChEBI" id="CHEBI:29108"/>
    </ligand>
</feature>
<feature type="modified residue" description="N,N,N-trimethylserine" evidence="4">
    <location>
        <position position="2"/>
    </location>
</feature>
<feature type="modified residue" description="Phosphoserine" evidence="3">
    <location>
        <position position="14"/>
    </location>
</feature>
<feature type="modified residue" description="Phosphoserine" evidence="2">
    <location>
        <position position="15"/>
    </location>
</feature>
<feature type="modified residue" description="Phosphoserine" evidence="3">
    <location>
        <position position="19"/>
    </location>
</feature>
<feature type="modified residue" description="Phosphothreonine" evidence="13">
    <location>
        <position position="52"/>
    </location>
</feature>
<feature type="sequence conflict" description="In Ref. 1; AAA41621." evidence="11" ref="1">
    <original>D</original>
    <variation>A</variation>
    <location>
        <position position="41"/>
    </location>
</feature>
<feature type="sequence conflict" description="In Ref. 1; AAA41621." evidence="11" ref="1">
    <original>G</original>
    <variation>R</variation>
    <location>
        <position position="87"/>
    </location>
</feature>
<feature type="sequence conflict" description="In Ref. 1; AAA41621." evidence="11" ref="1">
    <original>D</original>
    <variation>G</variation>
    <location>
        <position position="94"/>
    </location>
</feature>
<feature type="sequence conflict" description="In Ref. 1; AAA41621." evidence="11" ref="1">
    <original>I</original>
    <variation>L</variation>
    <location>
        <position position="99"/>
    </location>
</feature>
<feature type="sequence conflict" description="In Ref. 1; AAA41621." evidence="11" ref="1">
    <original>DPEGKGSLKADYVR</original>
    <variation>APRRRITGADCVQ</variation>
    <location>
        <begin position="107"/>
        <end position="120"/>
    </location>
</feature>
<feature type="sequence conflict" description="In Ref. 1; AAA41621." evidence="11" ref="1">
    <original>I</original>
    <variation>T</variation>
    <location>
        <position position="135"/>
    </location>
</feature>
<feature type="sequence conflict" description="In Ref. 1; AAA41621." evidence="11" ref="1">
    <original>D</original>
    <variation>N</variation>
    <location>
        <position position="145"/>
    </location>
</feature>
<gene>
    <name evidence="12" type="primary">Myl2</name>
    <name evidence="12" type="synonym">Mlc2</name>
</gene>
<accession>P08733</accession>
<accession>A0JMZ7</accession>
<name>MLRV_RAT</name>
<protein>
    <recommendedName>
        <fullName evidence="11">Myosin regulatory light chain 2, ventricular/cardiac muscle isoform</fullName>
        <shortName evidence="11">MLC-2</shortName>
        <shortName>MLC-2v</shortName>
    </recommendedName>
    <alternativeName>
        <fullName evidence="5">Myosin light chain 2, slow skeletal/ventricular muscle isoform</fullName>
        <shortName evidence="5">MLC-2s/v</shortName>
    </alternativeName>
</protein>
<dbReference type="EMBL" id="M11851">
    <property type="protein sequence ID" value="AAA41621.1"/>
    <property type="molecule type" value="mRNA"/>
</dbReference>
<dbReference type="EMBL" id="X07314">
    <property type="protein sequence ID" value="CAA30277.1"/>
    <property type="molecule type" value="mRNA"/>
</dbReference>
<dbReference type="EMBL" id="M30304">
    <property type="protein sequence ID" value="AAA41624.1"/>
    <property type="molecule type" value="Genomic_DNA"/>
</dbReference>
<dbReference type="EMBL" id="M30298">
    <property type="protein sequence ID" value="AAA41624.1"/>
    <property type="status" value="JOINED"/>
    <property type="molecule type" value="Genomic_DNA"/>
</dbReference>
<dbReference type="EMBL" id="M30299">
    <property type="protein sequence ID" value="AAA41624.1"/>
    <property type="status" value="JOINED"/>
    <property type="molecule type" value="Genomic_DNA"/>
</dbReference>
<dbReference type="EMBL" id="M30300">
    <property type="protein sequence ID" value="AAA41624.1"/>
    <property type="status" value="JOINED"/>
    <property type="molecule type" value="Genomic_DNA"/>
</dbReference>
<dbReference type="EMBL" id="M30301">
    <property type="protein sequence ID" value="AAA41624.1"/>
    <property type="status" value="JOINED"/>
    <property type="molecule type" value="Genomic_DNA"/>
</dbReference>
<dbReference type="EMBL" id="M30302">
    <property type="protein sequence ID" value="AAA41624.1"/>
    <property type="status" value="JOINED"/>
    <property type="molecule type" value="Genomic_DNA"/>
</dbReference>
<dbReference type="EMBL" id="M30303">
    <property type="protein sequence ID" value="AAA41624.1"/>
    <property type="status" value="JOINED"/>
    <property type="molecule type" value="Genomic_DNA"/>
</dbReference>
<dbReference type="EMBL" id="BC126064">
    <property type="protein sequence ID" value="AAI26065.1"/>
    <property type="molecule type" value="mRNA"/>
</dbReference>
<dbReference type="PIR" id="S00752">
    <property type="entry name" value="MORT2C"/>
</dbReference>
<dbReference type="RefSeq" id="NP_001030329.2">
    <property type="nucleotide sequence ID" value="NM_001035252.2"/>
</dbReference>
<dbReference type="SMR" id="P08733"/>
<dbReference type="BioGRID" id="264496">
    <property type="interactions" value="2"/>
</dbReference>
<dbReference type="FunCoup" id="P08733">
    <property type="interactions" value="427"/>
</dbReference>
<dbReference type="STRING" id="10116.ENSRNOP00000039707"/>
<dbReference type="GlyGen" id="P08733">
    <property type="glycosylation" value="1 site, 1 O-linked glycan (1 site)"/>
</dbReference>
<dbReference type="iPTMnet" id="P08733"/>
<dbReference type="PhosphoSitePlus" id="P08733"/>
<dbReference type="PaxDb" id="10116-ENSRNOP00000039707"/>
<dbReference type="Ensembl" id="ENSRNOT00000050368.6">
    <property type="protein sequence ID" value="ENSRNOP00000039707.6"/>
    <property type="gene ID" value="ENSRNOG00000030848.6"/>
</dbReference>
<dbReference type="GeneID" id="363925"/>
<dbReference type="KEGG" id="rno:363925"/>
<dbReference type="UCSC" id="RGD:1564245">
    <property type="organism name" value="rat"/>
</dbReference>
<dbReference type="AGR" id="RGD:1564245"/>
<dbReference type="CTD" id="4633"/>
<dbReference type="RGD" id="1564245">
    <property type="gene designation" value="Myl2"/>
</dbReference>
<dbReference type="eggNOG" id="KOG0031">
    <property type="taxonomic scope" value="Eukaryota"/>
</dbReference>
<dbReference type="GeneTree" id="ENSGT00940000155578"/>
<dbReference type="InParanoid" id="P08733"/>
<dbReference type="OrthoDB" id="10560at9989"/>
<dbReference type="PhylomeDB" id="P08733"/>
<dbReference type="Reactome" id="R-RNO-390522">
    <property type="pathway name" value="Striated Muscle Contraction"/>
</dbReference>
<dbReference type="PRO" id="PR:P08733"/>
<dbReference type="Proteomes" id="UP000002494">
    <property type="component" value="Chromosome 12"/>
</dbReference>
<dbReference type="GO" id="GO:0031672">
    <property type="term" value="C:A band"/>
    <property type="evidence" value="ECO:0007669"/>
    <property type="project" value="UniProtKB-SubCell"/>
</dbReference>
<dbReference type="GO" id="GO:0015629">
    <property type="term" value="C:actin cytoskeleton"/>
    <property type="evidence" value="ECO:0000266"/>
    <property type="project" value="RGD"/>
</dbReference>
<dbReference type="GO" id="GO:0097512">
    <property type="term" value="C:cardiac myofibril"/>
    <property type="evidence" value="ECO:0000266"/>
    <property type="project" value="RGD"/>
</dbReference>
<dbReference type="GO" id="GO:0043292">
    <property type="term" value="C:contractile muscle fiber"/>
    <property type="evidence" value="ECO:0000314"/>
    <property type="project" value="RGD"/>
</dbReference>
<dbReference type="GO" id="GO:0005737">
    <property type="term" value="C:cytoplasm"/>
    <property type="evidence" value="ECO:0000318"/>
    <property type="project" value="GO_Central"/>
</dbReference>
<dbReference type="GO" id="GO:0005856">
    <property type="term" value="C:cytoskeleton"/>
    <property type="evidence" value="ECO:0000266"/>
    <property type="project" value="RGD"/>
</dbReference>
<dbReference type="GO" id="GO:0030016">
    <property type="term" value="C:myofibril"/>
    <property type="evidence" value="ECO:0000314"/>
    <property type="project" value="RGD"/>
</dbReference>
<dbReference type="GO" id="GO:0016459">
    <property type="term" value="C:myosin complex"/>
    <property type="evidence" value="ECO:0007669"/>
    <property type="project" value="UniProtKB-KW"/>
</dbReference>
<dbReference type="GO" id="GO:0003785">
    <property type="term" value="F:actin monomer binding"/>
    <property type="evidence" value="ECO:0000266"/>
    <property type="project" value="RGD"/>
</dbReference>
<dbReference type="GO" id="GO:0005509">
    <property type="term" value="F:calcium ion binding"/>
    <property type="evidence" value="ECO:0000266"/>
    <property type="project" value="RGD"/>
</dbReference>
<dbReference type="GO" id="GO:0008307">
    <property type="term" value="F:structural constituent of muscle"/>
    <property type="evidence" value="ECO:0000250"/>
    <property type="project" value="UniProtKB"/>
</dbReference>
<dbReference type="GO" id="GO:0060048">
    <property type="term" value="P:cardiac muscle contraction"/>
    <property type="evidence" value="ECO:0000314"/>
    <property type="project" value="RGD"/>
</dbReference>
<dbReference type="GO" id="GO:0055003">
    <property type="term" value="P:cardiac myofibril assembly"/>
    <property type="evidence" value="ECO:0000266"/>
    <property type="project" value="RGD"/>
</dbReference>
<dbReference type="GO" id="GO:0061049">
    <property type="term" value="P:cell growth involved in cardiac muscle cell development"/>
    <property type="evidence" value="ECO:0000270"/>
    <property type="project" value="RGD"/>
</dbReference>
<dbReference type="GO" id="GO:0060047">
    <property type="term" value="P:heart contraction"/>
    <property type="evidence" value="ECO:0000266"/>
    <property type="project" value="RGD"/>
</dbReference>
<dbReference type="GO" id="GO:0007507">
    <property type="term" value="P:heart development"/>
    <property type="evidence" value="ECO:0000250"/>
    <property type="project" value="UniProtKB"/>
</dbReference>
<dbReference type="GO" id="GO:0003007">
    <property type="term" value="P:heart morphogenesis"/>
    <property type="evidence" value="ECO:0000266"/>
    <property type="project" value="RGD"/>
</dbReference>
<dbReference type="GO" id="GO:0055001">
    <property type="term" value="P:muscle cell development"/>
    <property type="evidence" value="ECO:0000266"/>
    <property type="project" value="RGD"/>
</dbReference>
<dbReference type="GO" id="GO:0042694">
    <property type="term" value="P:muscle cell fate specification"/>
    <property type="evidence" value="ECO:0000266"/>
    <property type="project" value="RGD"/>
</dbReference>
<dbReference type="GO" id="GO:0030308">
    <property type="term" value="P:negative regulation of cell growth"/>
    <property type="evidence" value="ECO:0000266"/>
    <property type="project" value="RGD"/>
</dbReference>
<dbReference type="GO" id="GO:0098735">
    <property type="term" value="P:positive regulation of the force of heart contraction"/>
    <property type="evidence" value="ECO:0000250"/>
    <property type="project" value="UniProtKB"/>
</dbReference>
<dbReference type="GO" id="GO:0009791">
    <property type="term" value="P:post-embryonic development"/>
    <property type="evidence" value="ECO:0000266"/>
    <property type="project" value="RGD"/>
</dbReference>
<dbReference type="GO" id="GO:0002026">
    <property type="term" value="P:regulation of the force of heart contraction"/>
    <property type="evidence" value="ECO:0000314"/>
    <property type="project" value="UniProtKB"/>
</dbReference>
<dbReference type="GO" id="GO:0055010">
    <property type="term" value="P:ventricular cardiac muscle tissue morphogenesis"/>
    <property type="evidence" value="ECO:0000266"/>
    <property type="project" value="RGD"/>
</dbReference>
<dbReference type="CDD" id="cd00051">
    <property type="entry name" value="EFh"/>
    <property type="match status" value="1"/>
</dbReference>
<dbReference type="FunFam" id="1.10.238.10:FF:000010">
    <property type="entry name" value="Myosin regulatory light chain 2, atrial isoform"/>
    <property type="match status" value="1"/>
</dbReference>
<dbReference type="FunFam" id="1.10.238.10:FF:000007">
    <property type="entry name" value="Putative myosin regulatory light chain sqh"/>
    <property type="match status" value="1"/>
</dbReference>
<dbReference type="Gene3D" id="1.10.238.10">
    <property type="entry name" value="EF-hand"/>
    <property type="match status" value="2"/>
</dbReference>
<dbReference type="InterPro" id="IPR011992">
    <property type="entry name" value="EF-hand-dom_pair"/>
</dbReference>
<dbReference type="InterPro" id="IPR018247">
    <property type="entry name" value="EF_Hand_1_Ca_BS"/>
</dbReference>
<dbReference type="InterPro" id="IPR002048">
    <property type="entry name" value="EF_hand_dom"/>
</dbReference>
<dbReference type="InterPro" id="IPR050403">
    <property type="entry name" value="Myosin_RLC"/>
</dbReference>
<dbReference type="PANTHER" id="PTHR23049">
    <property type="entry name" value="MYOSIN REGULATORY LIGHT CHAIN 2"/>
    <property type="match status" value="1"/>
</dbReference>
<dbReference type="Pfam" id="PF13499">
    <property type="entry name" value="EF-hand_7"/>
    <property type="match status" value="1"/>
</dbReference>
<dbReference type="SMART" id="SM00054">
    <property type="entry name" value="EFh"/>
    <property type="match status" value="3"/>
</dbReference>
<dbReference type="SUPFAM" id="SSF47473">
    <property type="entry name" value="EF-hand"/>
    <property type="match status" value="1"/>
</dbReference>
<dbReference type="PROSITE" id="PS00018">
    <property type="entry name" value="EF_HAND_1"/>
    <property type="match status" value="1"/>
</dbReference>
<dbReference type="PROSITE" id="PS50222">
    <property type="entry name" value="EF_HAND_2"/>
    <property type="match status" value="3"/>
</dbReference>
<evidence type="ECO:0000250" key="1"/>
<evidence type="ECO:0000250" key="2">
    <source>
        <dbReference type="UniProtKB" id="P10916"/>
    </source>
</evidence>
<evidence type="ECO:0000250" key="3">
    <source>
        <dbReference type="UniProtKB" id="P51667"/>
    </source>
</evidence>
<evidence type="ECO:0000250" key="4">
    <source>
        <dbReference type="UniProtKB" id="Q3SZE5"/>
    </source>
</evidence>
<evidence type="ECO:0000250" key="5">
    <source>
        <dbReference type="UniProtKB" id="Q7M2V4"/>
    </source>
</evidence>
<evidence type="ECO:0000255" key="6">
    <source>
        <dbReference type="PROSITE-ProRule" id="PRU00448"/>
    </source>
</evidence>
<evidence type="ECO:0000269" key="7">
    <source>
    </source>
</evidence>
<evidence type="ECO:0000269" key="8">
    <source>
    </source>
</evidence>
<evidence type="ECO:0000269" key="9">
    <source>
    </source>
</evidence>
<evidence type="ECO:0000269" key="10">
    <source>
    </source>
</evidence>
<evidence type="ECO:0000305" key="11"/>
<evidence type="ECO:0000312" key="12">
    <source>
        <dbReference type="RGD" id="1564245"/>
    </source>
</evidence>
<evidence type="ECO:0007744" key="13">
    <source>
    </source>
</evidence>
<comment type="function">
    <text evidence="3 8">Contractile protein that plays a role in heart development and function (By similarity). Following phosphorylation, plays a role in cross-bridge cycling kinetics and cardiac muscle contraction by increasing myosin lever arm stiffness and promoting myosin head diffusion; as a consequence of the increase in maximum contraction force and calcium sensitivity of contraction force. These events altogether slow down myosin kinetics and prolong duty cycle resulting in accumulated myosins being cooperatively recruited to actin binding sites to sustain thin filament activation as a means to fine-tune myofilament calcium sensitivity to force (PubMed:15331360). During cardiogenesis plays an early role in cardiac contractility by promoting cardiac myofibril assembly (By similarity).</text>
</comment>
<comment type="subunit">
    <text evidence="1 2">Myosin is a hexamer of 2 heavy chains and 4 light chains (By similarity). Interacts with MYOC (By similarity).</text>
</comment>
<comment type="subcellular location">
    <subcellularLocation>
        <location evidence="10">Cytoplasm</location>
        <location evidence="10">Myofibril</location>
        <location evidence="10">Sarcomere</location>
        <location evidence="10">A band</location>
    </subcellularLocation>
</comment>
<comment type="tissue specificity">
    <text evidence="7">Abundantly expressed in both cardiac and slow skeletal muscle (soleus), with no detectable expression in fast skeletal muscle (vastus lateralis) or non-muscle tissue.</text>
</comment>
<comment type="PTM">
    <text evidence="3">N-terminus is methylated by METTL11A/NTM1.</text>
</comment>
<comment type="PTM">
    <text evidence="3 9 10">Phosphorylated by MYLK3 and MYLK2; promotes cardiac muscle contraction and function (By similarity) (PubMed:17885681). Dephosphorylated by PPP1CB complexed to PPP1R12B (PubMed:16431080). The phosphorylated form in adult is expressed as gradients across the heart from endocardium (low phosphorylation) to epicardium (high phosphorylation); regulates cardiac torsion and workload distribution (By similarity).</text>
</comment>
<comment type="miscellaneous">
    <text>This chain binds calcium.</text>
</comment>
<organism>
    <name type="scientific">Rattus norvegicus</name>
    <name type="common">Rat</name>
    <dbReference type="NCBI Taxonomy" id="10116"/>
    <lineage>
        <taxon>Eukaryota</taxon>
        <taxon>Metazoa</taxon>
        <taxon>Chordata</taxon>
        <taxon>Craniata</taxon>
        <taxon>Vertebrata</taxon>
        <taxon>Euteleostomi</taxon>
        <taxon>Mammalia</taxon>
        <taxon>Eutheria</taxon>
        <taxon>Euarchontoglires</taxon>
        <taxon>Glires</taxon>
        <taxon>Rodentia</taxon>
        <taxon>Myomorpha</taxon>
        <taxon>Muroidea</taxon>
        <taxon>Muridae</taxon>
        <taxon>Murinae</taxon>
        <taxon>Rattus</taxon>
    </lineage>
</organism>
<reference key="1">
    <citation type="journal article" date="1986" name="J. Biol. Chem.">
        <title>Heart myosin light chain 2 gene. Nucleotide sequence of full length cDNA and expression in normal and hypertensive rat.</title>
        <authorList>
            <person name="Kumar C.C."/>
            <person name="Cribbs L."/>
            <person name="Delaney P."/>
            <person name="Chien K.R."/>
            <person name="Siddiqui M.A.Q."/>
        </authorList>
    </citation>
    <scope>NUCLEOTIDE SEQUENCE [MRNA]</scope>
    <source>
        <tissue>Heart</tissue>
    </source>
</reference>
<reference key="2">
    <citation type="journal article" date="1988" name="Nucleic Acids Res.">
        <title>Nucleotide sequence of full length cDNAs encoding rat cardiac myosin light chain-2.</title>
        <authorList>
            <person name="Henderson S.A."/>
            <person name="You-Cheng X."/>
            <person name="Sen A."/>
            <person name="Chien K.R."/>
        </authorList>
    </citation>
    <scope>NUCLEOTIDE SEQUENCE [MRNA]</scope>
    <source>
        <strain>Sprague-Dawley</strain>
    </source>
</reference>
<reference key="3">
    <citation type="journal article" date="1989" name="J. Biol. Chem.">
        <title>Structure, organization, and expression of the rat cardiac myosin light chain-2 gene. Identification of a 250-base pair fragment which confers cardiac-specific expression.</title>
        <authorList>
            <person name="Henderson S.A."/>
            <person name="Spencer M."/>
            <person name="Sen A."/>
            <person name="Kumar C."/>
            <person name="Siddiqui M.A.Q."/>
            <person name="Chien K.R."/>
        </authorList>
    </citation>
    <scope>NUCLEOTIDE SEQUENCE [GENOMIC DNA]</scope>
    <source>
        <tissue>Heart</tissue>
    </source>
</reference>
<reference key="4">
    <citation type="journal article" date="2004" name="Genome Res.">
        <title>The status, quality, and expansion of the NIH full-length cDNA project: the Mammalian Gene Collection (MGC).</title>
        <authorList>
            <consortium name="The MGC Project Team"/>
        </authorList>
    </citation>
    <scope>NUCLEOTIDE SEQUENCE [LARGE SCALE MRNA]</scope>
    <source>
        <tissue>Heart</tissue>
    </source>
</reference>
<reference key="5">
    <citation type="journal article" date="1992" name="J. Biol. Chem.">
        <title>Myosin light chain-2 luciferase transgenic mice reveal distinct regulatory programs for cardiac and skeletal muscle-specific expression of a single contractile protein gene.</title>
        <authorList>
            <person name="Lee K.J."/>
            <person name="Ross R.S."/>
            <person name="Rockman H.A."/>
            <person name="Harris A.N."/>
            <person name="O'Brien T.X."/>
            <person name="Bilsen M."/>
            <person name="Shubeita H.E."/>
            <person name="Kandolf R."/>
            <person name="Brem G."/>
            <person name="Price J."/>
            <person name="Evans S.M."/>
            <person name="Zhu H."/>
            <person name="Franz W.M."/>
            <person name="Chien K.R."/>
        </authorList>
    </citation>
    <scope>TISSUE SPECIFICITY</scope>
</reference>
<reference key="6">
    <citation type="journal article" date="2004" name="Am. J. Physiol.">
        <title>Basal myosin light chain phosphorylation is a determinant of Ca2+ sensitivity of force and activation dependence of the kinetics of myocardial force development.</title>
        <authorList>
            <person name="Olsson M.C."/>
            <person name="Patel J.R."/>
            <person name="Fitzsimons D.P."/>
            <person name="Walker J.W."/>
            <person name="Moss R.L."/>
        </authorList>
    </citation>
    <scope>FUNCTION</scope>
</reference>
<reference key="7">
    <citation type="journal article" date="2006" name="Cell. Signal.">
        <title>Characterization and function of MYPT2, a target subunit of myosin phosphatase in heart.</title>
        <authorList>
            <person name="Okamoto R."/>
            <person name="Kato T."/>
            <person name="Mizoguchi A."/>
            <person name="Takahashi N."/>
            <person name="Nakakuki T."/>
            <person name="Mizutani H."/>
            <person name="Isaka N."/>
            <person name="Imanaka-Yoshida K."/>
            <person name="Kaibuchi K."/>
            <person name="Lu Z."/>
            <person name="Mabuchi K."/>
            <person name="Tao T."/>
            <person name="Hartshorne D.J."/>
            <person name="Nakano T."/>
            <person name="Ito M."/>
        </authorList>
    </citation>
    <scope>DEPHOSPHORYLATION BY PPP1R12B-PPP1CB COMPLEX</scope>
</reference>
<reference key="8">
    <citation type="journal article" date="2007" name="J. Clin. Invest.">
        <title>A cardiac myosin light chain kinase regulates sarcomere assembly in the vertebrate heart.</title>
        <authorList>
            <person name="Seguchi O."/>
            <person name="Takashima S."/>
            <person name="Yamazaki S."/>
            <person name="Asakura M."/>
            <person name="Asano Y."/>
            <person name="Shintani Y."/>
            <person name="Wakeno M."/>
            <person name="Minamino T."/>
            <person name="Kondo H."/>
            <person name="Furukawa H."/>
            <person name="Nakamaru K."/>
            <person name="Naito A."/>
            <person name="Takahashi T."/>
            <person name="Ohtsuka T."/>
            <person name="Kawakami K."/>
            <person name="Isomura T."/>
            <person name="Kitamura S."/>
            <person name="Tomoike H."/>
            <person name="Mochizuki N."/>
            <person name="Kitakaze M."/>
        </authorList>
    </citation>
    <scope>SUBCELLULAR LOCATION</scope>
    <scope>PHOSPHORYLATION BY MYLK3</scope>
</reference>
<reference key="9">
    <citation type="journal article" date="2012" name="Nat. Commun.">
        <title>Quantitative maps of protein phosphorylation sites across 14 different rat organs and tissues.</title>
        <authorList>
            <person name="Lundby A."/>
            <person name="Secher A."/>
            <person name="Lage K."/>
            <person name="Nordsborg N.B."/>
            <person name="Dmytriyev A."/>
            <person name="Lundby C."/>
            <person name="Olsen J.V."/>
        </authorList>
    </citation>
    <scope>PHOSPHORYLATION [LARGE SCALE ANALYSIS] AT THR-52</scope>
    <scope>IDENTIFICATION BY MASS SPECTROMETRY [LARGE SCALE ANALYSIS]</scope>
</reference>
<sequence>MSPKKAKKRLEGGSSNVFSMFEQTQIQEFKEAFTIMDQNRDGFIDKNDLRDTFAALGRVNVKNEEIDEMIKEAPGPINFTVFLTMFGEKLKGADPEETILNAFKVFDPEGKGSLKADYVREMLTTQAERFSKEEIDQMFAAFPPDVTGNLDYKNLVHIITHGEEKD</sequence>
<proteinExistence type="evidence at protein level"/>
<keyword id="KW-0106">Calcium</keyword>
<keyword id="KW-0963">Cytoplasm</keyword>
<keyword id="KW-0479">Metal-binding</keyword>
<keyword id="KW-0488">Methylation</keyword>
<keyword id="KW-0505">Motor protein</keyword>
<keyword id="KW-0514">Muscle protein</keyword>
<keyword id="KW-0518">Myosin</keyword>
<keyword id="KW-0597">Phosphoprotein</keyword>
<keyword id="KW-1185">Reference proteome</keyword>
<keyword id="KW-0677">Repeat</keyword>